<evidence type="ECO:0000255" key="1">
    <source>
        <dbReference type="HAMAP-Rule" id="MF_01047"/>
    </source>
</evidence>
<sequence>MIIYLHGFDSNSPGNHEKVLQLQFIDPDVRLVSYSTRHPKHDMQHLLKEVDKMLQLNVDERPLICGVGLGGYWAERIGFLCDIRQVVFNPNLFPYENMEGKIDRPEEYADIDTKCVTNFREKNRDRCLVILSRHDEALDSQRSAQALHPYYEIVWDEEQTHKFKNISPHLQRIKAFKTLG</sequence>
<name>YCFP_SALG2</name>
<accession>B5RB92</accession>
<reference key="1">
    <citation type="journal article" date="2008" name="Genome Res.">
        <title>Comparative genome analysis of Salmonella enteritidis PT4 and Salmonella gallinarum 287/91 provides insights into evolutionary and host adaptation pathways.</title>
        <authorList>
            <person name="Thomson N.R."/>
            <person name="Clayton D.J."/>
            <person name="Windhorst D."/>
            <person name="Vernikos G."/>
            <person name="Davidson S."/>
            <person name="Churcher C."/>
            <person name="Quail M.A."/>
            <person name="Stevens M."/>
            <person name="Jones M.A."/>
            <person name="Watson M."/>
            <person name="Barron A."/>
            <person name="Layton A."/>
            <person name="Pickard D."/>
            <person name="Kingsley R.A."/>
            <person name="Bignell A."/>
            <person name="Clark L."/>
            <person name="Harris B."/>
            <person name="Ormond D."/>
            <person name="Abdellah Z."/>
            <person name="Brooks K."/>
            <person name="Cherevach I."/>
            <person name="Chillingworth T."/>
            <person name="Woodward J."/>
            <person name="Norberczak H."/>
            <person name="Lord A."/>
            <person name="Arrowsmith C."/>
            <person name="Jagels K."/>
            <person name="Moule S."/>
            <person name="Mungall K."/>
            <person name="Saunders M."/>
            <person name="Whitehead S."/>
            <person name="Chabalgoity J.A."/>
            <person name="Maskell D."/>
            <person name="Humphreys T."/>
            <person name="Roberts M."/>
            <person name="Barrow P.A."/>
            <person name="Dougan G."/>
            <person name="Parkhill J."/>
        </authorList>
    </citation>
    <scope>NUCLEOTIDE SEQUENCE [LARGE SCALE GENOMIC DNA]</scope>
    <source>
        <strain>287/91 / NCTC 13346</strain>
    </source>
</reference>
<dbReference type="EMBL" id="AM933173">
    <property type="protein sequence ID" value="CAR37763.1"/>
    <property type="molecule type" value="Genomic_DNA"/>
</dbReference>
<dbReference type="RefSeq" id="WP_000587946.1">
    <property type="nucleotide sequence ID" value="NC_011274.1"/>
</dbReference>
<dbReference type="SMR" id="B5RB92"/>
<dbReference type="ESTHER" id="salty-ycfp">
    <property type="family name" value="abh_upf00227"/>
</dbReference>
<dbReference type="KEGG" id="seg:SG1912"/>
<dbReference type="HOGENOM" id="CLU_128769_0_0_6"/>
<dbReference type="Proteomes" id="UP000008321">
    <property type="component" value="Chromosome"/>
</dbReference>
<dbReference type="FunFam" id="3.40.50.1820:FF:000007">
    <property type="entry name" value="UPF0227 protein YcfP"/>
    <property type="match status" value="1"/>
</dbReference>
<dbReference type="Gene3D" id="3.40.50.1820">
    <property type="entry name" value="alpha/beta hydrolase"/>
    <property type="match status" value="1"/>
</dbReference>
<dbReference type="HAMAP" id="MF_01047">
    <property type="entry name" value="UPF0227"/>
    <property type="match status" value="1"/>
</dbReference>
<dbReference type="InterPro" id="IPR029058">
    <property type="entry name" value="AB_hydrolase_fold"/>
</dbReference>
<dbReference type="InterPro" id="IPR022987">
    <property type="entry name" value="UPF0227"/>
</dbReference>
<dbReference type="InterPro" id="IPR008886">
    <property type="entry name" value="UPF0227/Esterase_YqiA"/>
</dbReference>
<dbReference type="NCBIfam" id="NF003431">
    <property type="entry name" value="PRK04940.1"/>
    <property type="match status" value="1"/>
</dbReference>
<dbReference type="PANTHER" id="PTHR35602">
    <property type="entry name" value="ESTERASE YQIA-RELATED"/>
    <property type="match status" value="1"/>
</dbReference>
<dbReference type="PANTHER" id="PTHR35602:SF2">
    <property type="entry name" value="UPF0227 PROTEIN YCFP"/>
    <property type="match status" value="1"/>
</dbReference>
<dbReference type="Pfam" id="PF05728">
    <property type="entry name" value="UPF0227"/>
    <property type="match status" value="1"/>
</dbReference>
<dbReference type="SUPFAM" id="SSF53474">
    <property type="entry name" value="alpha/beta-Hydrolases"/>
    <property type="match status" value="1"/>
</dbReference>
<organism>
    <name type="scientific">Salmonella gallinarum (strain 287/91 / NCTC 13346)</name>
    <dbReference type="NCBI Taxonomy" id="550538"/>
    <lineage>
        <taxon>Bacteria</taxon>
        <taxon>Pseudomonadati</taxon>
        <taxon>Pseudomonadota</taxon>
        <taxon>Gammaproteobacteria</taxon>
        <taxon>Enterobacterales</taxon>
        <taxon>Enterobacteriaceae</taxon>
        <taxon>Salmonella</taxon>
    </lineage>
</organism>
<protein>
    <recommendedName>
        <fullName evidence="1">UPF0227 protein YcfP</fullName>
    </recommendedName>
</protein>
<feature type="chain" id="PRO_1000136197" description="UPF0227 protein YcfP">
    <location>
        <begin position="1"/>
        <end position="180"/>
    </location>
</feature>
<gene>
    <name evidence="1" type="primary">ycfP</name>
    <name type="ordered locus">SG1912</name>
</gene>
<proteinExistence type="inferred from homology"/>
<comment type="similarity">
    <text evidence="1">Belongs to the UPF0227 family.</text>
</comment>